<organism>
    <name type="scientific">Mycobacterium tuberculosis (strain CDC 1551 / Oshkosh)</name>
    <dbReference type="NCBI Taxonomy" id="83331"/>
    <lineage>
        <taxon>Bacteria</taxon>
        <taxon>Bacillati</taxon>
        <taxon>Actinomycetota</taxon>
        <taxon>Actinomycetes</taxon>
        <taxon>Mycobacteriales</taxon>
        <taxon>Mycobacteriaceae</taxon>
        <taxon>Mycobacterium</taxon>
        <taxon>Mycobacterium tuberculosis complex</taxon>
    </lineage>
</organism>
<name>ESPE_MYCTO</name>
<proteinExistence type="inferred from homology"/>
<accession>P9WJD2</accession>
<accession>L0TDS9</accession>
<accession>P96213</accession>
<accession>Q7D4P9</accession>
<comment type="subcellular location">
    <subcellularLocation>
        <location evidence="4">Cell membrane</location>
        <topology evidence="2">Single-pass membrane protein</topology>
    </subcellularLocation>
</comment>
<gene>
    <name type="primary">espE</name>
    <name type="ordered locus">MT3978</name>
</gene>
<sequence>MASGSGLCKTTSNFIWGQLLLLGEGIPDPGDIFNTGSSLFKQISDKMGLAIPGTNWIGQAAEAYLNQNIAQQLRAQVMGDLDKLTGNMISNQAKYVSDTRDVLRAMKKMIDGVYKVCKGLEKIPLLGHLWSWELAIPMSGIAMAVVGGALLYLTIMTLMNATNLRGILGRLIEMLTTLPKFPGLPGLPSLPDIIDGLWPPKLPDIPIPGLPDIPGLPDFKWPPTPGSPLFPDLPSFPGFPGFPEFPAIPGFPALPGLPSIPNLFPGLPGLGDLLPGVGDLGKLPTWTELAALPDFLGGFAGLPSLGFGNLLSFASLPTVGQVTATMGQLQQLVAAGGGPSQLASMGSQQAQLISSQAQQGGQQHATLVSDKKEDEEGVAEAERAPIDAGTAASQRGQEGTVL</sequence>
<feature type="chain" id="PRO_0000427850" description="ESX-1 secretion-associated protein EspE">
    <location>
        <begin position="1"/>
        <end position="402"/>
    </location>
</feature>
<feature type="transmembrane region" description="Helical" evidence="2">
    <location>
        <begin position="136"/>
        <end position="156"/>
    </location>
</feature>
<feature type="region of interest" description="Disordered" evidence="3">
    <location>
        <begin position="345"/>
        <end position="402"/>
    </location>
</feature>
<feature type="compositionally biased region" description="Low complexity" evidence="3">
    <location>
        <begin position="346"/>
        <end position="365"/>
    </location>
</feature>
<feature type="compositionally biased region" description="Basic and acidic residues" evidence="3">
    <location>
        <begin position="369"/>
        <end position="385"/>
    </location>
</feature>
<feature type="compositionally biased region" description="Polar residues" evidence="3">
    <location>
        <begin position="391"/>
        <end position="402"/>
    </location>
</feature>
<evidence type="ECO:0000250" key="1">
    <source>
        <dbReference type="UniProtKB" id="P9WJD3"/>
    </source>
</evidence>
<evidence type="ECO:0000255" key="2"/>
<evidence type="ECO:0000256" key="3">
    <source>
        <dbReference type="SAM" id="MobiDB-lite"/>
    </source>
</evidence>
<evidence type="ECO:0000305" key="4"/>
<keyword id="KW-1003">Cell membrane</keyword>
<keyword id="KW-0472">Membrane</keyword>
<keyword id="KW-1185">Reference proteome</keyword>
<keyword id="KW-0812">Transmembrane</keyword>
<keyword id="KW-1133">Transmembrane helix</keyword>
<dbReference type="EMBL" id="AE000516">
    <property type="protein sequence ID" value="AAK48347.1"/>
    <property type="molecule type" value="Genomic_DNA"/>
</dbReference>
<dbReference type="PIR" id="E70656">
    <property type="entry name" value="E70656"/>
</dbReference>
<dbReference type="RefSeq" id="WP_003899736.1">
    <property type="nucleotide sequence ID" value="NZ_KK341227.1"/>
</dbReference>
<dbReference type="KEGG" id="mtc:MT3978"/>
<dbReference type="PATRIC" id="fig|83331.31.peg.4279"/>
<dbReference type="HOGENOM" id="CLU_037846_0_0_11"/>
<dbReference type="Proteomes" id="UP000001020">
    <property type="component" value="Chromosome"/>
</dbReference>
<dbReference type="GO" id="GO:0005886">
    <property type="term" value="C:plasma membrane"/>
    <property type="evidence" value="ECO:0007669"/>
    <property type="project" value="UniProtKB-SubCell"/>
</dbReference>
<dbReference type="InterPro" id="IPR043796">
    <property type="entry name" value="ESX-1_EspA/EspE-like"/>
</dbReference>
<dbReference type="Pfam" id="PF18879">
    <property type="entry name" value="EspA_EspE"/>
    <property type="match status" value="1"/>
</dbReference>
<reference key="1">
    <citation type="journal article" date="2002" name="J. Bacteriol.">
        <title>Whole-genome comparison of Mycobacterium tuberculosis clinical and laboratory strains.</title>
        <authorList>
            <person name="Fleischmann R.D."/>
            <person name="Alland D."/>
            <person name="Eisen J.A."/>
            <person name="Carpenter L."/>
            <person name="White O."/>
            <person name="Peterson J.D."/>
            <person name="DeBoy R.T."/>
            <person name="Dodson R.J."/>
            <person name="Gwinn M.L."/>
            <person name="Haft D.H."/>
            <person name="Hickey E.K."/>
            <person name="Kolonay J.F."/>
            <person name="Nelson W.C."/>
            <person name="Umayam L.A."/>
            <person name="Ermolaeva M.D."/>
            <person name="Salzberg S.L."/>
            <person name="Delcher A."/>
            <person name="Utterback T.R."/>
            <person name="Weidman J.F."/>
            <person name="Khouri H.M."/>
            <person name="Gill J."/>
            <person name="Mikula A."/>
            <person name="Bishai W."/>
            <person name="Jacobs W.R. Jr."/>
            <person name="Venter J.C."/>
            <person name="Fraser C.M."/>
        </authorList>
    </citation>
    <scope>NUCLEOTIDE SEQUENCE [LARGE SCALE GENOMIC DNA]</scope>
    <source>
        <strain>CDC 1551 / Oshkosh</strain>
    </source>
</reference>
<protein>
    <recommendedName>
        <fullName evidence="1">ESX-1 secretion-associated protein EspE</fullName>
    </recommendedName>
</protein>